<name>GATC_STRPG</name>
<comment type="function">
    <text evidence="1">Allows the formation of correctly charged Asn-tRNA(Asn) or Gln-tRNA(Gln) through the transamidation of misacylated Asp-tRNA(Asn) or Glu-tRNA(Gln) in organisms which lack either or both of asparaginyl-tRNA or glutaminyl-tRNA synthetases. The reaction takes place in the presence of glutamine and ATP through an activated phospho-Asp-tRNA(Asn) or phospho-Glu-tRNA(Gln).</text>
</comment>
<comment type="catalytic activity">
    <reaction evidence="1">
        <text>L-glutamyl-tRNA(Gln) + L-glutamine + ATP + H2O = L-glutaminyl-tRNA(Gln) + L-glutamate + ADP + phosphate + H(+)</text>
        <dbReference type="Rhea" id="RHEA:17521"/>
        <dbReference type="Rhea" id="RHEA-COMP:9681"/>
        <dbReference type="Rhea" id="RHEA-COMP:9684"/>
        <dbReference type="ChEBI" id="CHEBI:15377"/>
        <dbReference type="ChEBI" id="CHEBI:15378"/>
        <dbReference type="ChEBI" id="CHEBI:29985"/>
        <dbReference type="ChEBI" id="CHEBI:30616"/>
        <dbReference type="ChEBI" id="CHEBI:43474"/>
        <dbReference type="ChEBI" id="CHEBI:58359"/>
        <dbReference type="ChEBI" id="CHEBI:78520"/>
        <dbReference type="ChEBI" id="CHEBI:78521"/>
        <dbReference type="ChEBI" id="CHEBI:456216"/>
    </reaction>
</comment>
<comment type="catalytic activity">
    <reaction evidence="1">
        <text>L-aspartyl-tRNA(Asn) + L-glutamine + ATP + H2O = L-asparaginyl-tRNA(Asn) + L-glutamate + ADP + phosphate + 2 H(+)</text>
        <dbReference type="Rhea" id="RHEA:14513"/>
        <dbReference type="Rhea" id="RHEA-COMP:9674"/>
        <dbReference type="Rhea" id="RHEA-COMP:9677"/>
        <dbReference type="ChEBI" id="CHEBI:15377"/>
        <dbReference type="ChEBI" id="CHEBI:15378"/>
        <dbReference type="ChEBI" id="CHEBI:29985"/>
        <dbReference type="ChEBI" id="CHEBI:30616"/>
        <dbReference type="ChEBI" id="CHEBI:43474"/>
        <dbReference type="ChEBI" id="CHEBI:58359"/>
        <dbReference type="ChEBI" id="CHEBI:78515"/>
        <dbReference type="ChEBI" id="CHEBI:78516"/>
        <dbReference type="ChEBI" id="CHEBI:456216"/>
    </reaction>
</comment>
<comment type="subunit">
    <text evidence="1">Heterotrimer of A, B and C subunits.</text>
</comment>
<comment type="similarity">
    <text evidence="1">Belongs to the GatC family.</text>
</comment>
<protein>
    <recommendedName>
        <fullName evidence="1">Aspartyl/glutamyl-tRNA(Asn/Gln) amidotransferase subunit C</fullName>
        <shortName evidence="1">Asp/Glu-ADT subunit C</shortName>
        <ecNumber evidence="1">6.3.5.-</ecNumber>
    </recommendedName>
</protein>
<proteinExistence type="inferred from homology"/>
<reference key="1">
    <citation type="journal article" date="2007" name="J. Bacteriol.">
        <title>Complete genome of acute rheumatic fever-associated serotype M5 Streptococcus pyogenes strain Manfredo.</title>
        <authorList>
            <person name="Holden M.T.G."/>
            <person name="Scott A."/>
            <person name="Cherevach I."/>
            <person name="Chillingworth T."/>
            <person name="Churcher C."/>
            <person name="Cronin A."/>
            <person name="Dowd L."/>
            <person name="Feltwell T."/>
            <person name="Hamlin N."/>
            <person name="Holroyd S."/>
            <person name="Jagels K."/>
            <person name="Moule S."/>
            <person name="Mungall K."/>
            <person name="Quail M.A."/>
            <person name="Price C."/>
            <person name="Rabbinowitsch E."/>
            <person name="Sharp S."/>
            <person name="Skelton J."/>
            <person name="Whitehead S."/>
            <person name="Barrell B.G."/>
            <person name="Kehoe M."/>
            <person name="Parkhill J."/>
        </authorList>
    </citation>
    <scope>NUCLEOTIDE SEQUENCE [LARGE SCALE GENOMIC DNA]</scope>
    <source>
        <strain>Manfredo</strain>
    </source>
</reference>
<gene>
    <name evidence="1" type="primary">gatC</name>
    <name type="ordered locus">SpyM50337</name>
</gene>
<accession>A2RCV6</accession>
<feature type="chain" id="PRO_1000016222" description="Aspartyl/glutamyl-tRNA(Asn/Gln) amidotransferase subunit C">
    <location>
        <begin position="1"/>
        <end position="100"/>
    </location>
</feature>
<sequence>MKISEEEVRHVAKLSKLSFSESETTTFATTLSKIVDMVELLNEVDTEGVAITTTMADKKNVMRQDVAEEGTDRALLFKNVPEKENHFIKVPAILDDGGDA</sequence>
<dbReference type="EC" id="6.3.5.-" evidence="1"/>
<dbReference type="EMBL" id="AM295007">
    <property type="protein sequence ID" value="CAM29679.1"/>
    <property type="molecule type" value="Genomic_DNA"/>
</dbReference>
<dbReference type="RefSeq" id="WP_002988561.1">
    <property type="nucleotide sequence ID" value="NC_009332.1"/>
</dbReference>
<dbReference type="SMR" id="A2RCV6"/>
<dbReference type="GeneID" id="83690022"/>
<dbReference type="KEGG" id="spf:SpyM50337"/>
<dbReference type="HOGENOM" id="CLU_105899_1_2_9"/>
<dbReference type="GO" id="GO:0050566">
    <property type="term" value="F:asparaginyl-tRNA synthase (glutamine-hydrolyzing) activity"/>
    <property type="evidence" value="ECO:0007669"/>
    <property type="project" value="RHEA"/>
</dbReference>
<dbReference type="GO" id="GO:0005524">
    <property type="term" value="F:ATP binding"/>
    <property type="evidence" value="ECO:0007669"/>
    <property type="project" value="UniProtKB-KW"/>
</dbReference>
<dbReference type="GO" id="GO:0050567">
    <property type="term" value="F:glutaminyl-tRNA synthase (glutamine-hydrolyzing) activity"/>
    <property type="evidence" value="ECO:0007669"/>
    <property type="project" value="UniProtKB-UniRule"/>
</dbReference>
<dbReference type="GO" id="GO:0070681">
    <property type="term" value="P:glutaminyl-tRNAGln biosynthesis via transamidation"/>
    <property type="evidence" value="ECO:0007669"/>
    <property type="project" value="TreeGrafter"/>
</dbReference>
<dbReference type="GO" id="GO:0006450">
    <property type="term" value="P:regulation of translational fidelity"/>
    <property type="evidence" value="ECO:0007669"/>
    <property type="project" value="InterPro"/>
</dbReference>
<dbReference type="GO" id="GO:0006412">
    <property type="term" value="P:translation"/>
    <property type="evidence" value="ECO:0007669"/>
    <property type="project" value="UniProtKB-UniRule"/>
</dbReference>
<dbReference type="Gene3D" id="1.10.20.60">
    <property type="entry name" value="Glu-tRNAGln amidotransferase C subunit, N-terminal domain"/>
    <property type="match status" value="1"/>
</dbReference>
<dbReference type="HAMAP" id="MF_00122">
    <property type="entry name" value="GatC"/>
    <property type="match status" value="1"/>
</dbReference>
<dbReference type="InterPro" id="IPR036113">
    <property type="entry name" value="Asp/Glu-ADT_sf_sub_c"/>
</dbReference>
<dbReference type="InterPro" id="IPR003837">
    <property type="entry name" value="GatC"/>
</dbReference>
<dbReference type="NCBIfam" id="TIGR00135">
    <property type="entry name" value="gatC"/>
    <property type="match status" value="1"/>
</dbReference>
<dbReference type="PANTHER" id="PTHR15004">
    <property type="entry name" value="GLUTAMYL-TRNA(GLN) AMIDOTRANSFERASE SUBUNIT C, MITOCHONDRIAL"/>
    <property type="match status" value="1"/>
</dbReference>
<dbReference type="PANTHER" id="PTHR15004:SF0">
    <property type="entry name" value="GLUTAMYL-TRNA(GLN) AMIDOTRANSFERASE SUBUNIT C, MITOCHONDRIAL"/>
    <property type="match status" value="1"/>
</dbReference>
<dbReference type="Pfam" id="PF02686">
    <property type="entry name" value="GatC"/>
    <property type="match status" value="1"/>
</dbReference>
<dbReference type="SUPFAM" id="SSF141000">
    <property type="entry name" value="Glu-tRNAGln amidotransferase C subunit"/>
    <property type="match status" value="1"/>
</dbReference>
<evidence type="ECO:0000255" key="1">
    <source>
        <dbReference type="HAMAP-Rule" id="MF_00122"/>
    </source>
</evidence>
<organism>
    <name type="scientific">Streptococcus pyogenes serotype M5 (strain Manfredo)</name>
    <dbReference type="NCBI Taxonomy" id="160491"/>
    <lineage>
        <taxon>Bacteria</taxon>
        <taxon>Bacillati</taxon>
        <taxon>Bacillota</taxon>
        <taxon>Bacilli</taxon>
        <taxon>Lactobacillales</taxon>
        <taxon>Streptococcaceae</taxon>
        <taxon>Streptococcus</taxon>
    </lineage>
</organism>
<keyword id="KW-0067">ATP-binding</keyword>
<keyword id="KW-0436">Ligase</keyword>
<keyword id="KW-0547">Nucleotide-binding</keyword>
<keyword id="KW-0648">Protein biosynthesis</keyword>